<organism>
    <name type="scientific">Popillia japonica</name>
    <name type="common">Japanese beetle</name>
    <dbReference type="NCBI Taxonomy" id="7064"/>
    <lineage>
        <taxon>Eukaryota</taxon>
        <taxon>Metazoa</taxon>
        <taxon>Ecdysozoa</taxon>
        <taxon>Arthropoda</taxon>
        <taxon>Hexapoda</taxon>
        <taxon>Insecta</taxon>
        <taxon>Pterygota</taxon>
        <taxon>Neoptera</taxon>
        <taxon>Endopterygota</taxon>
        <taxon>Coleoptera</taxon>
        <taxon>Polyphaga</taxon>
        <taxon>Scarabaeiformia</taxon>
        <taxon>Scarabaeidae</taxon>
        <taxon>Rutelinae</taxon>
        <taxon>Popillia</taxon>
    </lineage>
</organism>
<dbReference type="EC" id="2.7.7.49"/>
<dbReference type="EMBL" id="L00949">
    <property type="protein sequence ID" value="AAB66358.1"/>
    <property type="molecule type" value="Genomic_DNA"/>
</dbReference>
<dbReference type="PIR" id="B47757">
    <property type="entry name" value="B47757"/>
</dbReference>
<dbReference type="SMR" id="Q03275"/>
<dbReference type="GO" id="GO:0004519">
    <property type="term" value="F:endonuclease activity"/>
    <property type="evidence" value="ECO:0007669"/>
    <property type="project" value="UniProtKB-KW"/>
</dbReference>
<dbReference type="GO" id="GO:0003964">
    <property type="term" value="F:RNA-directed DNA polymerase activity"/>
    <property type="evidence" value="ECO:0007669"/>
    <property type="project" value="UniProtKB-KW"/>
</dbReference>
<dbReference type="InterPro" id="IPR000477">
    <property type="entry name" value="RT_dom"/>
</dbReference>
<dbReference type="PANTHER" id="PTHR37557">
    <property type="entry name" value="115 KDA PROTEIN IN TYPE-1 RETROTRANSPOSABLE ELEMENT R1DM-LIKE PROTEIN-RELATED-RELATED"/>
    <property type="match status" value="1"/>
</dbReference>
<dbReference type="PANTHER" id="PTHR37557:SF4">
    <property type="entry name" value="CCHC-TYPE DOMAIN-CONTAINING PROTEIN"/>
    <property type="match status" value="1"/>
</dbReference>
<dbReference type="PROSITE" id="PS50878">
    <property type="entry name" value="RT_POL"/>
    <property type="match status" value="1"/>
</dbReference>
<sequence length="482" mass="53735">AYADDLILFANDHRAANRLLKVATEFFRERGLALNATKSAALSVGVVPGKKQLYTHTKNLFYVGGKAIPQLTPDDYFKYLGSRYNFSGQVRPSVELLKTQLARVQSAPLKPAQKLTMIRDHVVARFLSCLQSVRVTLKALKDADRLVRLSVRKVLHLNKSSPDAYIHAPIREGGLGIISLRAHIPAIMRSRLFKIATTADPLTATVLQIPAVEKFYQTLLRWTEGNGGSTTNIRKEWGRKLQESYSGNGLRQGNTSGVSGDWLRNPPNFWSGADYIDAVRLRGNLLPTRGIPSNPPHERKCRAGCNKTESLSHVLQGCPLTHWHPIRRHDRVAGRLRQIAEKKGWMVEEEMRLRLADGSLRKPDLVMAQGDTIVVCDVTIVWEGPNPLTMAYHQKVAYYSQQPVLDAIHDRFPGRSVVVLALVLGARGTWCDQNNAITDTLSLSRAQNSLINNCINGSIIVHREFMRTSFTRATGGRGRGDI</sequence>
<feature type="chain" id="PRO_0000058502" description="Retrovirus-related Pol polyprotein from type-1 retrotransposable element R2">
    <location>
        <begin position="1" status="less than"/>
        <end position="482"/>
    </location>
</feature>
<feature type="domain" description="Reverse transcriptase" evidence="1">
    <location>
        <begin position="1" status="less than"/>
        <end position="84"/>
    </location>
</feature>
<feature type="region of interest" description="Nucleic acid-binding endonuclease">
    <location>
        <begin position="208"/>
        <end position="482"/>
    </location>
</feature>
<feature type="non-terminal residue">
    <location>
        <position position="1"/>
    </location>
</feature>
<proteinExistence type="predicted"/>
<accession>Q03275</accession>
<protein>
    <recommendedName>
        <fullName>Retrovirus-related Pol polyprotein from type-1 retrotransposable element R2</fullName>
    </recommendedName>
    <alternativeName>
        <fullName>Retrovirus-related Pol polyprotein from type I retrotransposable element R2</fullName>
    </alternativeName>
    <domain>
        <recommendedName>
            <fullName>Reverse transcriptase</fullName>
            <ecNumber>2.7.7.49</ecNumber>
        </recommendedName>
    </domain>
    <domain>
        <recommendedName>
            <fullName>Endonuclease</fullName>
        </recommendedName>
    </domain>
</protein>
<keyword id="KW-0255">Endonuclease</keyword>
<keyword id="KW-0378">Hydrolase</keyword>
<keyword id="KW-0540">Nuclease</keyword>
<keyword id="KW-0548">Nucleotidyltransferase</keyword>
<keyword id="KW-0695">RNA-directed DNA polymerase</keyword>
<keyword id="KW-0808">Transferase</keyword>
<keyword id="KW-0814">Transposable element</keyword>
<evidence type="ECO:0000255" key="1">
    <source>
        <dbReference type="PROSITE-ProRule" id="PRU00405"/>
    </source>
</evidence>
<reference key="1">
    <citation type="journal article" date="1993" name="Mol. Biol. Evol.">
        <title>Sequence relationship of retrotransposable elements R1 and R2 within and between divergent insect species.</title>
        <authorList>
            <person name="Burke W.D."/>
            <person name="Eickbush D.G."/>
            <person name="Xiong Y."/>
            <person name="Jakubczak J.L."/>
            <person name="Eickbush T.H."/>
        </authorList>
    </citation>
    <scope>NUCLEOTIDE SEQUENCE [GENOMIC DNA]</scope>
</reference>
<reference key="2">
    <citation type="submission" date="1997-08" db="EMBL/GenBank/DDBJ databases">
        <authorList>
            <person name="Burke W.D."/>
            <person name="Eickbush D.G."/>
            <person name="Xiong Y."/>
            <person name="Jakubczak J.L."/>
            <person name="Eickbush T.H."/>
        </authorList>
    </citation>
    <scope>SEQUENCE REVISION</scope>
</reference>
<comment type="catalytic activity">
    <reaction evidence="1">
        <text>DNA(n) + a 2'-deoxyribonucleoside 5'-triphosphate = DNA(n+1) + diphosphate</text>
        <dbReference type="Rhea" id="RHEA:22508"/>
        <dbReference type="Rhea" id="RHEA-COMP:17339"/>
        <dbReference type="Rhea" id="RHEA-COMP:17340"/>
        <dbReference type="ChEBI" id="CHEBI:33019"/>
        <dbReference type="ChEBI" id="CHEBI:61560"/>
        <dbReference type="ChEBI" id="CHEBI:173112"/>
        <dbReference type="EC" id="2.7.7.49"/>
    </reaction>
</comment>
<name>PO24_POPJA</name>